<protein>
    <recommendedName>
        <fullName evidence="1">Flagellar L-ring protein</fullName>
    </recommendedName>
    <alternativeName>
        <fullName evidence="1">Basal body L-ring protein</fullName>
    </alternativeName>
</protein>
<organism>
    <name type="scientific">Pseudomonas fluorescens (strain SBW25)</name>
    <dbReference type="NCBI Taxonomy" id="216595"/>
    <lineage>
        <taxon>Bacteria</taxon>
        <taxon>Pseudomonadati</taxon>
        <taxon>Pseudomonadota</taxon>
        <taxon>Gammaproteobacteria</taxon>
        <taxon>Pseudomonadales</taxon>
        <taxon>Pseudomonadaceae</taxon>
        <taxon>Pseudomonas</taxon>
    </lineage>
</organism>
<evidence type="ECO:0000255" key="1">
    <source>
        <dbReference type="HAMAP-Rule" id="MF_00415"/>
    </source>
</evidence>
<sequence length="231" mass="24197">MNRYVSVLALSGIAVLAGCVAPTPKPNDPYYAPVLPRTPLPAAANNGSIYQAGFEQNLYSDRKAFRVGDIITITLNEKTQASKNANSQVGKTSKTGIGLTSLFGAVPNTNNPLGDGDLSLSAGYSGDRATNGKSSAGQGNSLTGSITVTVADVLPNGIIAVRGEKWMTLNTGDELVRIAGMVRADDISTDNTVPSTRIADARITYSGTGSFADASQPGWFDRFFLSPLFPF</sequence>
<dbReference type="EMBL" id="AM181176">
    <property type="protein sequence ID" value="CAY51138.1"/>
    <property type="molecule type" value="Genomic_DNA"/>
</dbReference>
<dbReference type="RefSeq" id="WP_015885208.1">
    <property type="nucleotide sequence ID" value="NC_012660.1"/>
</dbReference>
<dbReference type="SMR" id="C3K0W0"/>
<dbReference type="STRING" id="294.SRM1_01493"/>
<dbReference type="GeneID" id="93466047"/>
<dbReference type="eggNOG" id="COG2063">
    <property type="taxonomic scope" value="Bacteria"/>
</dbReference>
<dbReference type="HOGENOM" id="CLU_069313_0_2_6"/>
<dbReference type="OrthoDB" id="9789463at2"/>
<dbReference type="GO" id="GO:0009427">
    <property type="term" value="C:bacterial-type flagellum basal body, distal rod, L ring"/>
    <property type="evidence" value="ECO:0007669"/>
    <property type="project" value="InterPro"/>
</dbReference>
<dbReference type="GO" id="GO:0009279">
    <property type="term" value="C:cell outer membrane"/>
    <property type="evidence" value="ECO:0007669"/>
    <property type="project" value="UniProtKB-SubCell"/>
</dbReference>
<dbReference type="GO" id="GO:0003774">
    <property type="term" value="F:cytoskeletal motor activity"/>
    <property type="evidence" value="ECO:0007669"/>
    <property type="project" value="InterPro"/>
</dbReference>
<dbReference type="GO" id="GO:0071973">
    <property type="term" value="P:bacterial-type flagellum-dependent cell motility"/>
    <property type="evidence" value="ECO:0007669"/>
    <property type="project" value="InterPro"/>
</dbReference>
<dbReference type="HAMAP" id="MF_00415">
    <property type="entry name" value="FlgH"/>
    <property type="match status" value="1"/>
</dbReference>
<dbReference type="InterPro" id="IPR000527">
    <property type="entry name" value="Flag_Lring"/>
</dbReference>
<dbReference type="NCBIfam" id="NF001304">
    <property type="entry name" value="PRK00249.1-4"/>
    <property type="match status" value="1"/>
</dbReference>
<dbReference type="PANTHER" id="PTHR34933">
    <property type="entry name" value="FLAGELLAR L-RING PROTEIN"/>
    <property type="match status" value="1"/>
</dbReference>
<dbReference type="PANTHER" id="PTHR34933:SF1">
    <property type="entry name" value="FLAGELLAR L-RING PROTEIN"/>
    <property type="match status" value="1"/>
</dbReference>
<dbReference type="Pfam" id="PF02107">
    <property type="entry name" value="FlgH"/>
    <property type="match status" value="1"/>
</dbReference>
<dbReference type="PRINTS" id="PR01008">
    <property type="entry name" value="FLGLRINGFLGH"/>
</dbReference>
<dbReference type="PROSITE" id="PS51257">
    <property type="entry name" value="PROKAR_LIPOPROTEIN"/>
    <property type="match status" value="1"/>
</dbReference>
<name>FLGH_PSEFS</name>
<gene>
    <name evidence="1" type="primary">flgH</name>
    <name type="ordered locus">PFLU_4454</name>
</gene>
<proteinExistence type="inferred from homology"/>
<keyword id="KW-0975">Bacterial flagellum</keyword>
<keyword id="KW-0998">Cell outer membrane</keyword>
<keyword id="KW-0449">Lipoprotein</keyword>
<keyword id="KW-0472">Membrane</keyword>
<keyword id="KW-0564">Palmitate</keyword>
<keyword id="KW-0732">Signal</keyword>
<reference key="1">
    <citation type="journal article" date="2009" name="Genome Biol.">
        <title>Genomic and genetic analyses of diversity and plant interactions of Pseudomonas fluorescens.</title>
        <authorList>
            <person name="Silby M.W."/>
            <person name="Cerdeno-Tarraga A.M."/>
            <person name="Vernikos G.S."/>
            <person name="Giddens S.R."/>
            <person name="Jackson R.W."/>
            <person name="Preston G.M."/>
            <person name="Zhang X.-X."/>
            <person name="Moon C.D."/>
            <person name="Gehrig S.M."/>
            <person name="Godfrey S.A.C."/>
            <person name="Knight C.G."/>
            <person name="Malone J.G."/>
            <person name="Robinson Z."/>
            <person name="Spiers A.J."/>
            <person name="Harris S."/>
            <person name="Challis G.L."/>
            <person name="Yaxley A.M."/>
            <person name="Harris D."/>
            <person name="Seeger K."/>
            <person name="Murphy L."/>
            <person name="Rutter S."/>
            <person name="Squares R."/>
            <person name="Quail M.A."/>
            <person name="Saunders E."/>
            <person name="Mavromatis K."/>
            <person name="Brettin T.S."/>
            <person name="Bentley S.D."/>
            <person name="Hothersall J."/>
            <person name="Stephens E."/>
            <person name="Thomas C.M."/>
            <person name="Parkhill J."/>
            <person name="Levy S.B."/>
            <person name="Rainey P.B."/>
            <person name="Thomson N.R."/>
        </authorList>
    </citation>
    <scope>NUCLEOTIDE SEQUENCE [LARGE SCALE GENOMIC DNA]</scope>
    <source>
        <strain>SBW25</strain>
    </source>
</reference>
<comment type="function">
    <text evidence="1">Assembles around the rod to form the L-ring and probably protects the motor/basal body from shearing forces during rotation.</text>
</comment>
<comment type="subunit">
    <text evidence="1">The basal body constitutes a major portion of the flagellar organelle and consists of four rings (L,P,S, and M) mounted on a central rod.</text>
</comment>
<comment type="subcellular location">
    <subcellularLocation>
        <location evidence="1">Cell outer membrane</location>
        <topology evidence="1">Lipid-anchor</topology>
    </subcellularLocation>
    <subcellularLocation>
        <location evidence="1">Bacterial flagellum basal body</location>
    </subcellularLocation>
</comment>
<comment type="similarity">
    <text evidence="1">Belongs to the FlgH family.</text>
</comment>
<accession>C3K0W0</accession>
<feature type="signal peptide" evidence="1">
    <location>
        <begin position="1"/>
        <end position="18"/>
    </location>
</feature>
<feature type="chain" id="PRO_1000206020" description="Flagellar L-ring protein">
    <location>
        <begin position="19"/>
        <end position="231"/>
    </location>
</feature>
<feature type="lipid moiety-binding region" description="N-palmitoyl cysteine" evidence="1">
    <location>
        <position position="19"/>
    </location>
</feature>
<feature type="lipid moiety-binding region" description="S-diacylglycerol cysteine" evidence="1">
    <location>
        <position position="19"/>
    </location>
</feature>